<dbReference type="EMBL" id="AE009949">
    <property type="protein sequence ID" value="AAL96876.1"/>
    <property type="molecule type" value="Genomic_DNA"/>
</dbReference>
<dbReference type="RefSeq" id="WP_002986659.1">
    <property type="nucleotide sequence ID" value="NC_003485.1"/>
</dbReference>
<dbReference type="SMR" id="P60452"/>
<dbReference type="GeneID" id="83689573"/>
<dbReference type="KEGG" id="spm:spyM18_0050"/>
<dbReference type="HOGENOM" id="CLU_044142_4_1_9"/>
<dbReference type="GO" id="GO:0022625">
    <property type="term" value="C:cytosolic large ribosomal subunit"/>
    <property type="evidence" value="ECO:0007669"/>
    <property type="project" value="TreeGrafter"/>
</dbReference>
<dbReference type="GO" id="GO:0019843">
    <property type="term" value="F:rRNA binding"/>
    <property type="evidence" value="ECO:0007669"/>
    <property type="project" value="UniProtKB-UniRule"/>
</dbReference>
<dbReference type="GO" id="GO:0003735">
    <property type="term" value="F:structural constituent of ribosome"/>
    <property type="evidence" value="ECO:0007669"/>
    <property type="project" value="InterPro"/>
</dbReference>
<dbReference type="GO" id="GO:0006412">
    <property type="term" value="P:translation"/>
    <property type="evidence" value="ECO:0007669"/>
    <property type="project" value="UniProtKB-UniRule"/>
</dbReference>
<dbReference type="FunFam" id="2.40.30.10:FF:000004">
    <property type="entry name" value="50S ribosomal protein L3"/>
    <property type="match status" value="1"/>
</dbReference>
<dbReference type="FunFam" id="3.30.160.810:FF:000002">
    <property type="entry name" value="50S ribosomal protein L3"/>
    <property type="match status" value="1"/>
</dbReference>
<dbReference type="Gene3D" id="3.30.160.810">
    <property type="match status" value="1"/>
</dbReference>
<dbReference type="Gene3D" id="2.40.30.10">
    <property type="entry name" value="Translation factors"/>
    <property type="match status" value="1"/>
</dbReference>
<dbReference type="HAMAP" id="MF_01325_B">
    <property type="entry name" value="Ribosomal_uL3_B"/>
    <property type="match status" value="1"/>
</dbReference>
<dbReference type="InterPro" id="IPR000597">
    <property type="entry name" value="Ribosomal_uL3"/>
</dbReference>
<dbReference type="InterPro" id="IPR019927">
    <property type="entry name" value="Ribosomal_uL3_bac/org-type"/>
</dbReference>
<dbReference type="InterPro" id="IPR019926">
    <property type="entry name" value="Ribosomal_uL3_CS"/>
</dbReference>
<dbReference type="InterPro" id="IPR009000">
    <property type="entry name" value="Transl_B-barrel_sf"/>
</dbReference>
<dbReference type="NCBIfam" id="TIGR03625">
    <property type="entry name" value="L3_bact"/>
    <property type="match status" value="1"/>
</dbReference>
<dbReference type="PANTHER" id="PTHR11229">
    <property type="entry name" value="50S RIBOSOMAL PROTEIN L3"/>
    <property type="match status" value="1"/>
</dbReference>
<dbReference type="PANTHER" id="PTHR11229:SF16">
    <property type="entry name" value="LARGE RIBOSOMAL SUBUNIT PROTEIN UL3C"/>
    <property type="match status" value="1"/>
</dbReference>
<dbReference type="Pfam" id="PF00297">
    <property type="entry name" value="Ribosomal_L3"/>
    <property type="match status" value="1"/>
</dbReference>
<dbReference type="SUPFAM" id="SSF50447">
    <property type="entry name" value="Translation proteins"/>
    <property type="match status" value="1"/>
</dbReference>
<dbReference type="PROSITE" id="PS00474">
    <property type="entry name" value="RIBOSOMAL_L3"/>
    <property type="match status" value="1"/>
</dbReference>
<proteinExistence type="inferred from homology"/>
<comment type="function">
    <text evidence="1">One of the primary rRNA binding proteins, it binds directly near the 3'-end of the 23S rRNA, where it nucleates assembly of the 50S subunit.</text>
</comment>
<comment type="subunit">
    <text evidence="1">Part of the 50S ribosomal subunit. Forms a cluster with proteins L14 and L19.</text>
</comment>
<comment type="similarity">
    <text evidence="1">Belongs to the universal ribosomal protein uL3 family.</text>
</comment>
<organism>
    <name type="scientific">Streptococcus pyogenes serotype M18 (strain MGAS8232)</name>
    <dbReference type="NCBI Taxonomy" id="186103"/>
    <lineage>
        <taxon>Bacteria</taxon>
        <taxon>Bacillati</taxon>
        <taxon>Bacillota</taxon>
        <taxon>Bacilli</taxon>
        <taxon>Lactobacillales</taxon>
        <taxon>Streptococcaceae</taxon>
        <taxon>Streptococcus</taxon>
    </lineage>
</organism>
<sequence length="208" mass="22426">MTKGILGKKVGMTQIFTESGEFIPVTVIEATPNVVLQVKTVETDGYEAVQVGFDDKREVLSNKPAKGHVAKANTAPKRFIREFKNIEGLEVGAELSVEQFEAGDVVDVTGTSKGKGFQGVIKRHGQSRGPMAHGSRYHRRPGSMGPVAPNRVFKNKRLAGRMGGNRVTVQNLEIVQVIPEKNVILVKGNVPGAKKSLITIKSAVKAAK</sequence>
<accession>P60452</accession>
<accession>Q8P2Z6</accession>
<name>RL3_STRP8</name>
<reference key="1">
    <citation type="journal article" date="2002" name="Proc. Natl. Acad. Sci. U.S.A.">
        <title>Genome sequence and comparative microarray analysis of serotype M18 group A Streptococcus strains associated with acute rheumatic fever outbreaks.</title>
        <authorList>
            <person name="Smoot J.C."/>
            <person name="Barbian K.D."/>
            <person name="Van Gompel J.J."/>
            <person name="Smoot L.M."/>
            <person name="Chaussee M.S."/>
            <person name="Sylva G.L."/>
            <person name="Sturdevant D.E."/>
            <person name="Ricklefs S.M."/>
            <person name="Porcella S.F."/>
            <person name="Parkins L.D."/>
            <person name="Beres S.B."/>
            <person name="Campbell D.S."/>
            <person name="Smith T.M."/>
            <person name="Zhang Q."/>
            <person name="Kapur V."/>
            <person name="Daly J.A."/>
            <person name="Veasy L.G."/>
            <person name="Musser J.M."/>
        </authorList>
    </citation>
    <scope>NUCLEOTIDE SEQUENCE [LARGE SCALE GENOMIC DNA]</scope>
    <source>
        <strain>MGAS8232</strain>
    </source>
</reference>
<protein>
    <recommendedName>
        <fullName evidence="1">Large ribosomal subunit protein uL3</fullName>
    </recommendedName>
    <alternativeName>
        <fullName evidence="3">50S ribosomal protein L3</fullName>
    </alternativeName>
</protein>
<evidence type="ECO:0000255" key="1">
    <source>
        <dbReference type="HAMAP-Rule" id="MF_01325"/>
    </source>
</evidence>
<evidence type="ECO:0000256" key="2">
    <source>
        <dbReference type="SAM" id="MobiDB-lite"/>
    </source>
</evidence>
<evidence type="ECO:0000305" key="3"/>
<gene>
    <name evidence="1" type="primary">rplC</name>
    <name type="ordered locus">spyM18_0050</name>
</gene>
<feature type="chain" id="PRO_0000077173" description="Large ribosomal subunit protein uL3">
    <location>
        <begin position="1"/>
        <end position="208"/>
    </location>
</feature>
<feature type="region of interest" description="Disordered" evidence="2">
    <location>
        <begin position="116"/>
        <end position="148"/>
    </location>
</feature>
<keyword id="KW-0687">Ribonucleoprotein</keyword>
<keyword id="KW-0689">Ribosomal protein</keyword>
<keyword id="KW-0694">RNA-binding</keyword>
<keyword id="KW-0699">rRNA-binding</keyword>